<name>LPXA_ALISL</name>
<feature type="chain" id="PRO_1000122683" description="Acyl-[acyl-carrier-protein]--UDP-N-acetylglucosamine O-acyltransferase">
    <location>
        <begin position="1"/>
        <end position="262"/>
    </location>
</feature>
<evidence type="ECO:0000255" key="1">
    <source>
        <dbReference type="HAMAP-Rule" id="MF_00387"/>
    </source>
</evidence>
<organism>
    <name type="scientific">Aliivibrio salmonicida (strain LFI1238)</name>
    <name type="common">Vibrio salmonicida (strain LFI1238)</name>
    <dbReference type="NCBI Taxonomy" id="316275"/>
    <lineage>
        <taxon>Bacteria</taxon>
        <taxon>Pseudomonadati</taxon>
        <taxon>Pseudomonadota</taxon>
        <taxon>Gammaproteobacteria</taxon>
        <taxon>Vibrionales</taxon>
        <taxon>Vibrionaceae</taxon>
        <taxon>Aliivibrio</taxon>
    </lineage>
</organism>
<reference key="1">
    <citation type="journal article" date="2008" name="BMC Genomics">
        <title>The genome sequence of the fish pathogen Aliivibrio salmonicida strain LFI1238 shows extensive evidence of gene decay.</title>
        <authorList>
            <person name="Hjerde E."/>
            <person name="Lorentzen M.S."/>
            <person name="Holden M.T."/>
            <person name="Seeger K."/>
            <person name="Paulsen S."/>
            <person name="Bason N."/>
            <person name="Churcher C."/>
            <person name="Harris D."/>
            <person name="Norbertczak H."/>
            <person name="Quail M.A."/>
            <person name="Sanders S."/>
            <person name="Thurston S."/>
            <person name="Parkhill J."/>
            <person name="Willassen N.P."/>
            <person name="Thomson N.R."/>
        </authorList>
    </citation>
    <scope>NUCLEOTIDE SEQUENCE [LARGE SCALE GENOMIC DNA]</scope>
    <source>
        <strain>LFI1238</strain>
    </source>
</reference>
<comment type="function">
    <text evidence="1">Involved in the biosynthesis of lipid A, a phosphorylated glycolipid that anchors the lipopolysaccharide to the outer membrane of the cell.</text>
</comment>
<comment type="catalytic activity">
    <reaction evidence="1">
        <text>a (3R)-hydroxyacyl-[ACP] + UDP-N-acetyl-alpha-D-glucosamine = a UDP-3-O-[(3R)-3-hydroxyacyl]-N-acetyl-alpha-D-glucosamine + holo-[ACP]</text>
        <dbReference type="Rhea" id="RHEA:67812"/>
        <dbReference type="Rhea" id="RHEA-COMP:9685"/>
        <dbReference type="Rhea" id="RHEA-COMP:9945"/>
        <dbReference type="ChEBI" id="CHEBI:57705"/>
        <dbReference type="ChEBI" id="CHEBI:64479"/>
        <dbReference type="ChEBI" id="CHEBI:78827"/>
        <dbReference type="ChEBI" id="CHEBI:173225"/>
        <dbReference type="EC" id="2.3.1.129"/>
    </reaction>
</comment>
<comment type="pathway">
    <text evidence="1">Glycolipid biosynthesis; lipid IV(A) biosynthesis; lipid IV(A) from (3R)-3-hydroxytetradecanoyl-[acyl-carrier-protein] and UDP-N-acetyl-alpha-D-glucosamine: step 1/6.</text>
</comment>
<comment type="subunit">
    <text evidence="1">Homotrimer.</text>
</comment>
<comment type="subcellular location">
    <subcellularLocation>
        <location evidence="1">Cytoplasm</location>
    </subcellularLocation>
</comment>
<comment type="similarity">
    <text evidence="1">Belongs to the transferase hexapeptide repeat family. LpxA subfamily.</text>
</comment>
<keyword id="KW-0012">Acyltransferase</keyword>
<keyword id="KW-0963">Cytoplasm</keyword>
<keyword id="KW-0441">Lipid A biosynthesis</keyword>
<keyword id="KW-0444">Lipid biosynthesis</keyword>
<keyword id="KW-0443">Lipid metabolism</keyword>
<keyword id="KW-0677">Repeat</keyword>
<keyword id="KW-0808">Transferase</keyword>
<proteinExistence type="inferred from homology"/>
<dbReference type="EC" id="2.3.1.129" evidence="1"/>
<dbReference type="EMBL" id="FM178379">
    <property type="protein sequence ID" value="CAQ80099.1"/>
    <property type="molecule type" value="Genomic_DNA"/>
</dbReference>
<dbReference type="RefSeq" id="WP_012550903.1">
    <property type="nucleotide sequence ID" value="NC_011312.1"/>
</dbReference>
<dbReference type="SMR" id="B6EJW8"/>
<dbReference type="KEGG" id="vsa:VSAL_I2415"/>
<dbReference type="eggNOG" id="COG1043">
    <property type="taxonomic scope" value="Bacteria"/>
</dbReference>
<dbReference type="HOGENOM" id="CLU_061249_0_0_6"/>
<dbReference type="UniPathway" id="UPA00359">
    <property type="reaction ID" value="UER00477"/>
</dbReference>
<dbReference type="Proteomes" id="UP000001730">
    <property type="component" value="Chromosome 1"/>
</dbReference>
<dbReference type="GO" id="GO:0005737">
    <property type="term" value="C:cytoplasm"/>
    <property type="evidence" value="ECO:0007669"/>
    <property type="project" value="UniProtKB-SubCell"/>
</dbReference>
<dbReference type="GO" id="GO:0016020">
    <property type="term" value="C:membrane"/>
    <property type="evidence" value="ECO:0007669"/>
    <property type="project" value="GOC"/>
</dbReference>
<dbReference type="GO" id="GO:0008780">
    <property type="term" value="F:acyl-[acyl-carrier-protein]-UDP-N-acetylglucosamine O-acyltransferase activity"/>
    <property type="evidence" value="ECO:0007669"/>
    <property type="project" value="UniProtKB-UniRule"/>
</dbReference>
<dbReference type="GO" id="GO:0009245">
    <property type="term" value="P:lipid A biosynthetic process"/>
    <property type="evidence" value="ECO:0007669"/>
    <property type="project" value="UniProtKB-UniRule"/>
</dbReference>
<dbReference type="CDD" id="cd03351">
    <property type="entry name" value="LbH_UDP-GlcNAc_AT"/>
    <property type="match status" value="1"/>
</dbReference>
<dbReference type="Gene3D" id="2.160.10.10">
    <property type="entry name" value="Hexapeptide repeat proteins"/>
    <property type="match status" value="1"/>
</dbReference>
<dbReference type="Gene3D" id="1.20.1180.10">
    <property type="entry name" value="Udp N-acetylglucosamine O-acyltransferase, C-terminal domain"/>
    <property type="match status" value="1"/>
</dbReference>
<dbReference type="HAMAP" id="MF_00387">
    <property type="entry name" value="LpxA"/>
    <property type="match status" value="1"/>
</dbReference>
<dbReference type="InterPro" id="IPR029098">
    <property type="entry name" value="Acetyltransf_C"/>
</dbReference>
<dbReference type="InterPro" id="IPR037157">
    <property type="entry name" value="Acetyltransf_C_sf"/>
</dbReference>
<dbReference type="InterPro" id="IPR001451">
    <property type="entry name" value="Hexapep"/>
</dbReference>
<dbReference type="InterPro" id="IPR010137">
    <property type="entry name" value="Lipid_A_LpxA"/>
</dbReference>
<dbReference type="InterPro" id="IPR011004">
    <property type="entry name" value="Trimer_LpxA-like_sf"/>
</dbReference>
<dbReference type="NCBIfam" id="TIGR01852">
    <property type="entry name" value="lipid_A_lpxA"/>
    <property type="match status" value="1"/>
</dbReference>
<dbReference type="NCBIfam" id="NF003657">
    <property type="entry name" value="PRK05289.1"/>
    <property type="match status" value="1"/>
</dbReference>
<dbReference type="PANTHER" id="PTHR43480">
    <property type="entry name" value="ACYL-[ACYL-CARRIER-PROTEIN]--UDP-N-ACETYLGLUCOSAMINE O-ACYLTRANSFERASE"/>
    <property type="match status" value="1"/>
</dbReference>
<dbReference type="PANTHER" id="PTHR43480:SF1">
    <property type="entry name" value="ACYL-[ACYL-CARRIER-PROTEIN]--UDP-N-ACETYLGLUCOSAMINE O-ACYLTRANSFERASE, MITOCHONDRIAL-RELATED"/>
    <property type="match status" value="1"/>
</dbReference>
<dbReference type="Pfam" id="PF13720">
    <property type="entry name" value="Acetyltransf_11"/>
    <property type="match status" value="1"/>
</dbReference>
<dbReference type="Pfam" id="PF00132">
    <property type="entry name" value="Hexapep"/>
    <property type="match status" value="1"/>
</dbReference>
<dbReference type="PIRSF" id="PIRSF000456">
    <property type="entry name" value="UDP-GlcNAc_acltr"/>
    <property type="match status" value="1"/>
</dbReference>
<dbReference type="SUPFAM" id="SSF51161">
    <property type="entry name" value="Trimeric LpxA-like enzymes"/>
    <property type="match status" value="1"/>
</dbReference>
<gene>
    <name evidence="1" type="primary">lpxA</name>
    <name type="ordered locus">VSAL_I2415</name>
</gene>
<accession>B6EJW8</accession>
<protein>
    <recommendedName>
        <fullName evidence="1">Acyl-[acyl-carrier-protein]--UDP-N-acetylglucosamine O-acyltransferase</fullName>
        <shortName evidence="1">UDP-N-acetylglucosamine acyltransferase</shortName>
        <ecNumber evidence="1">2.3.1.129</ecNumber>
    </recommendedName>
</protein>
<sequence>MIHETAQIHPSAVIEGDVTIEANVSVGPFSYISGNVTIGEGTEVMSHVVIKGDTIIGKDNRIFSFAIIGEESQDKKYGGEATKVVVGDRNFIRESVQIHRGTVQDRGVTTVGNDNLLCVNVHIAHDCIVGSNIIMGNNATLAGHVTIEDYAIVSALSPVHQFCTVGAHSFIGGASVVVQDVPPFVMAQGNHCKPFGINIEGLKRRGFEKPEIHAIRRAYKALYRNGNTLEEAKEEIKTEIEAFPVLQGFLDLFEKSTRGIIR</sequence>